<proteinExistence type="evidence at transcript level"/>
<gene>
    <name evidence="1" type="primary">dnaJ</name>
    <name type="ordered locus">Atu0121</name>
    <name type="ORF">AGR_C_192</name>
</gene>
<feature type="chain" id="PRO_0000070708" description="Chaperone protein DnaJ">
    <location>
        <begin position="1"/>
        <end position="377"/>
    </location>
</feature>
<feature type="domain" description="J" evidence="1">
    <location>
        <begin position="5"/>
        <end position="70"/>
    </location>
</feature>
<feature type="repeat" description="CXXCXGXG motif">
    <location>
        <begin position="151"/>
        <end position="158"/>
    </location>
</feature>
<feature type="repeat" description="CXXCXGXG motif">
    <location>
        <begin position="168"/>
        <end position="175"/>
    </location>
</feature>
<feature type="repeat" description="CXXCXGXG motif">
    <location>
        <begin position="190"/>
        <end position="197"/>
    </location>
</feature>
<feature type="repeat" description="CXXCXGXG motif">
    <location>
        <begin position="204"/>
        <end position="211"/>
    </location>
</feature>
<feature type="zinc finger region" description="CR-type" evidence="1">
    <location>
        <begin position="138"/>
        <end position="216"/>
    </location>
</feature>
<feature type="binding site" evidence="1">
    <location>
        <position position="151"/>
    </location>
    <ligand>
        <name>Zn(2+)</name>
        <dbReference type="ChEBI" id="CHEBI:29105"/>
        <label>1</label>
    </ligand>
</feature>
<feature type="binding site" evidence="1">
    <location>
        <position position="154"/>
    </location>
    <ligand>
        <name>Zn(2+)</name>
        <dbReference type="ChEBI" id="CHEBI:29105"/>
        <label>1</label>
    </ligand>
</feature>
<feature type="binding site" evidence="1">
    <location>
        <position position="168"/>
    </location>
    <ligand>
        <name>Zn(2+)</name>
        <dbReference type="ChEBI" id="CHEBI:29105"/>
        <label>2</label>
    </ligand>
</feature>
<feature type="binding site" evidence="1">
    <location>
        <position position="171"/>
    </location>
    <ligand>
        <name>Zn(2+)</name>
        <dbReference type="ChEBI" id="CHEBI:29105"/>
        <label>2</label>
    </ligand>
</feature>
<feature type="binding site" evidence="1">
    <location>
        <position position="190"/>
    </location>
    <ligand>
        <name>Zn(2+)</name>
        <dbReference type="ChEBI" id="CHEBI:29105"/>
        <label>2</label>
    </ligand>
</feature>
<feature type="binding site" evidence="1">
    <location>
        <position position="193"/>
    </location>
    <ligand>
        <name>Zn(2+)</name>
        <dbReference type="ChEBI" id="CHEBI:29105"/>
        <label>2</label>
    </ligand>
</feature>
<feature type="binding site" evidence="1">
    <location>
        <position position="204"/>
    </location>
    <ligand>
        <name>Zn(2+)</name>
        <dbReference type="ChEBI" id="CHEBI:29105"/>
        <label>1</label>
    </ligand>
</feature>
<feature type="binding site" evidence="1">
    <location>
        <position position="207"/>
    </location>
    <ligand>
        <name>Zn(2+)</name>
        <dbReference type="ChEBI" id="CHEBI:29105"/>
        <label>1</label>
    </ligand>
</feature>
<feature type="sequence conflict" description="In Ref. 3; CAA60593." evidence="2" ref="3">
    <original>A</original>
    <variation>R</variation>
    <location>
        <position position="4"/>
    </location>
</feature>
<comment type="function">
    <text evidence="1">Participates actively in the response to hyperosmotic and heat shock by preventing the aggregation of stress-denatured proteins and by disaggregating proteins, also in an autonomous, DnaK-independent fashion. Unfolded proteins bind initially to DnaJ; upon interaction with the DnaJ-bound protein, DnaK hydrolyzes its bound ATP, resulting in the formation of a stable complex. GrpE releases ADP from DnaK; ATP binding to DnaK triggers the release of the substrate protein, thus completing the reaction cycle. Several rounds of ATP-dependent interactions between DnaJ, DnaK and GrpE are required for fully efficient folding. Also involved, together with DnaK and GrpE, in the DNA replication of plasmids through activation of initiation proteins.</text>
</comment>
<comment type="cofactor">
    <cofactor evidence="1">
        <name>Zn(2+)</name>
        <dbReference type="ChEBI" id="CHEBI:29105"/>
    </cofactor>
    <text evidence="1">Binds 2 Zn(2+) ions per monomer.</text>
</comment>
<comment type="subunit">
    <text evidence="1">Homodimer.</text>
</comment>
<comment type="subcellular location">
    <subcellularLocation>
        <location evidence="1">Cytoplasm</location>
    </subcellularLocation>
</comment>
<comment type="induction">
    <text>By heat shock.</text>
</comment>
<comment type="domain">
    <text evidence="1">The J domain is necessary and sufficient to stimulate DnaK ATPase activity. Zinc center 1 plays an important role in the autonomous, DnaK-independent chaperone activity of DnaJ. Zinc center 2 is essential for interaction with DnaK and for DnaJ activity.</text>
</comment>
<comment type="similarity">
    <text evidence="1">Belongs to the DnaJ family.</text>
</comment>
<keyword id="KW-0143">Chaperone</keyword>
<keyword id="KW-0963">Cytoplasm</keyword>
<keyword id="KW-0235">DNA replication</keyword>
<keyword id="KW-0479">Metal-binding</keyword>
<keyword id="KW-1185">Reference proteome</keyword>
<keyword id="KW-0677">Repeat</keyword>
<keyword id="KW-0346">Stress response</keyword>
<keyword id="KW-0862">Zinc</keyword>
<keyword id="KW-0863">Zinc-finger</keyword>
<organism>
    <name type="scientific">Agrobacterium fabrum (strain C58 / ATCC 33970)</name>
    <name type="common">Agrobacterium tumefaciens (strain C58)</name>
    <dbReference type="NCBI Taxonomy" id="176299"/>
    <lineage>
        <taxon>Bacteria</taxon>
        <taxon>Pseudomonadati</taxon>
        <taxon>Pseudomonadota</taxon>
        <taxon>Alphaproteobacteria</taxon>
        <taxon>Hyphomicrobiales</taxon>
        <taxon>Rhizobiaceae</taxon>
        <taxon>Rhizobium/Agrobacterium group</taxon>
        <taxon>Agrobacterium</taxon>
        <taxon>Agrobacterium tumefaciens complex</taxon>
    </lineage>
</organism>
<protein>
    <recommendedName>
        <fullName evidence="1">Chaperone protein DnaJ</fullName>
    </recommendedName>
</protein>
<sequence>MAKADFYETLGVSKTADEKELKSAFRKLAMKFHPDKNPDDADSERKFKEINEAYETLKDPQKRAAYDRFGHAAFENGGMGGGGMGGGGFANGGFSDIFEDIFGEMMGGGRARRSSGGRERGADLRYNMEITLEEAFAGKTAQIRVPTSITCDVCSGSGAKPGTQPKTCATCQGSGRVRAAQGFFSVERTCPTCHGRGQTISDPCGKCHGQGRVTEERSLSVNIPSGIEDGTRIRLQGEGEAGMRGGPAGDLYIFLSVRPHEFFQRDGADLYCTVPISMTTAALGGTFDVTTLDGTKSRVTVPEGTQPGKQFRLKGKGMPVLRSAQTGDLYIQIQIETPQKLSKRQRELLQEFEQLSSKENNPESTGFFARMKEFFDG</sequence>
<name>DNAJ_AGRFC</name>
<reference key="1">
    <citation type="journal article" date="2001" name="Science">
        <title>The genome of the natural genetic engineer Agrobacterium tumefaciens C58.</title>
        <authorList>
            <person name="Wood D.W."/>
            <person name="Setubal J.C."/>
            <person name="Kaul R."/>
            <person name="Monks D.E."/>
            <person name="Kitajima J.P."/>
            <person name="Okura V.K."/>
            <person name="Zhou Y."/>
            <person name="Chen L."/>
            <person name="Wood G.E."/>
            <person name="Almeida N.F. Jr."/>
            <person name="Woo L."/>
            <person name="Chen Y."/>
            <person name="Paulsen I.T."/>
            <person name="Eisen J.A."/>
            <person name="Karp P.D."/>
            <person name="Bovee D. Sr."/>
            <person name="Chapman P."/>
            <person name="Clendenning J."/>
            <person name="Deatherage G."/>
            <person name="Gillet W."/>
            <person name="Grant C."/>
            <person name="Kutyavin T."/>
            <person name="Levy R."/>
            <person name="Li M.-J."/>
            <person name="McClelland E."/>
            <person name="Palmieri A."/>
            <person name="Raymond C."/>
            <person name="Rouse G."/>
            <person name="Saenphimmachak C."/>
            <person name="Wu Z."/>
            <person name="Romero P."/>
            <person name="Gordon D."/>
            <person name="Zhang S."/>
            <person name="Yoo H."/>
            <person name="Tao Y."/>
            <person name="Biddle P."/>
            <person name="Jung M."/>
            <person name="Krespan W."/>
            <person name="Perry M."/>
            <person name="Gordon-Kamm B."/>
            <person name="Liao L."/>
            <person name="Kim S."/>
            <person name="Hendrick C."/>
            <person name="Zhao Z.-Y."/>
            <person name="Dolan M."/>
            <person name="Chumley F."/>
            <person name="Tingey S.V."/>
            <person name="Tomb J.-F."/>
            <person name="Gordon M.P."/>
            <person name="Olson M.V."/>
            <person name="Nester E.W."/>
        </authorList>
    </citation>
    <scope>NUCLEOTIDE SEQUENCE [LARGE SCALE GENOMIC DNA]</scope>
    <source>
        <strain>C58 / ATCC 33970</strain>
    </source>
</reference>
<reference key="2">
    <citation type="journal article" date="2001" name="Science">
        <title>Genome sequence of the plant pathogen and biotechnology agent Agrobacterium tumefaciens C58.</title>
        <authorList>
            <person name="Goodner B."/>
            <person name="Hinkle G."/>
            <person name="Gattung S."/>
            <person name="Miller N."/>
            <person name="Blanchard M."/>
            <person name="Qurollo B."/>
            <person name="Goldman B.S."/>
            <person name="Cao Y."/>
            <person name="Askenazi M."/>
            <person name="Halling C."/>
            <person name="Mullin L."/>
            <person name="Houmiel K."/>
            <person name="Gordon J."/>
            <person name="Vaudin M."/>
            <person name="Iartchouk O."/>
            <person name="Epp A."/>
            <person name="Liu F."/>
            <person name="Wollam C."/>
            <person name="Allinger M."/>
            <person name="Doughty D."/>
            <person name="Scott C."/>
            <person name="Lappas C."/>
            <person name="Markelz B."/>
            <person name="Flanagan C."/>
            <person name="Crowell C."/>
            <person name="Gurson J."/>
            <person name="Lomo C."/>
            <person name="Sear C."/>
            <person name="Strub G."/>
            <person name="Cielo C."/>
            <person name="Slater S."/>
        </authorList>
    </citation>
    <scope>NUCLEOTIDE SEQUENCE [LARGE SCALE GENOMIC DNA]</scope>
    <source>
        <strain>C58 / ATCC 33970</strain>
    </source>
</reference>
<reference key="3">
    <citation type="journal article" date="1995" name="J. Bacteriol.">
        <title>The dnaKJ operon of Agrobacterium tumefaciens: transcriptional analysis and evidence for a new heat shock promoter.</title>
        <authorList>
            <person name="Segal G."/>
            <person name="Ron E.Z."/>
        </authorList>
    </citation>
    <scope>NUCLEOTIDE SEQUENCE [GENOMIC DNA] OF 1-66</scope>
</reference>
<accession>P50018</accession>
<evidence type="ECO:0000255" key="1">
    <source>
        <dbReference type="HAMAP-Rule" id="MF_01152"/>
    </source>
</evidence>
<evidence type="ECO:0000305" key="2"/>
<dbReference type="EMBL" id="AE007869">
    <property type="protein sequence ID" value="AAK85941.1"/>
    <property type="molecule type" value="Genomic_DNA"/>
</dbReference>
<dbReference type="EMBL" id="X87113">
    <property type="protein sequence ID" value="CAA60593.1"/>
    <property type="molecule type" value="Genomic_DNA"/>
</dbReference>
<dbReference type="PIR" id="AD2591">
    <property type="entry name" value="AD2591"/>
</dbReference>
<dbReference type="PIR" id="D97373">
    <property type="entry name" value="D97373"/>
</dbReference>
<dbReference type="PIR" id="I39586">
    <property type="entry name" value="I39586"/>
</dbReference>
<dbReference type="RefSeq" id="NP_353156.1">
    <property type="nucleotide sequence ID" value="NC_003062.2"/>
</dbReference>
<dbReference type="RefSeq" id="WP_006309945.1">
    <property type="nucleotide sequence ID" value="NC_003062.2"/>
</dbReference>
<dbReference type="SMR" id="P50018"/>
<dbReference type="STRING" id="176299.Atu0121"/>
<dbReference type="DNASU" id="1132159"/>
<dbReference type="EnsemblBacteria" id="AAK85941">
    <property type="protein sequence ID" value="AAK85941"/>
    <property type="gene ID" value="Atu0121"/>
</dbReference>
<dbReference type="GeneID" id="1132159"/>
<dbReference type="KEGG" id="atu:Atu0121"/>
<dbReference type="PATRIC" id="fig|176299.10.peg.113"/>
<dbReference type="eggNOG" id="COG0484">
    <property type="taxonomic scope" value="Bacteria"/>
</dbReference>
<dbReference type="HOGENOM" id="CLU_017633_0_7_5"/>
<dbReference type="OrthoDB" id="9779889at2"/>
<dbReference type="PhylomeDB" id="P50018"/>
<dbReference type="BioCyc" id="AGRO:ATU0121-MONOMER"/>
<dbReference type="Proteomes" id="UP000000813">
    <property type="component" value="Chromosome circular"/>
</dbReference>
<dbReference type="GO" id="GO:0005737">
    <property type="term" value="C:cytoplasm"/>
    <property type="evidence" value="ECO:0007669"/>
    <property type="project" value="UniProtKB-SubCell"/>
</dbReference>
<dbReference type="GO" id="GO:0005524">
    <property type="term" value="F:ATP binding"/>
    <property type="evidence" value="ECO:0007669"/>
    <property type="project" value="InterPro"/>
</dbReference>
<dbReference type="GO" id="GO:0031072">
    <property type="term" value="F:heat shock protein binding"/>
    <property type="evidence" value="ECO:0007669"/>
    <property type="project" value="InterPro"/>
</dbReference>
<dbReference type="GO" id="GO:0051082">
    <property type="term" value="F:unfolded protein binding"/>
    <property type="evidence" value="ECO:0007669"/>
    <property type="project" value="UniProtKB-UniRule"/>
</dbReference>
<dbReference type="GO" id="GO:0008270">
    <property type="term" value="F:zinc ion binding"/>
    <property type="evidence" value="ECO:0007669"/>
    <property type="project" value="UniProtKB-UniRule"/>
</dbReference>
<dbReference type="GO" id="GO:0051085">
    <property type="term" value="P:chaperone cofactor-dependent protein refolding"/>
    <property type="evidence" value="ECO:0007669"/>
    <property type="project" value="TreeGrafter"/>
</dbReference>
<dbReference type="GO" id="GO:0006260">
    <property type="term" value="P:DNA replication"/>
    <property type="evidence" value="ECO:0007669"/>
    <property type="project" value="UniProtKB-KW"/>
</dbReference>
<dbReference type="GO" id="GO:0042026">
    <property type="term" value="P:protein refolding"/>
    <property type="evidence" value="ECO:0007669"/>
    <property type="project" value="TreeGrafter"/>
</dbReference>
<dbReference type="GO" id="GO:0009408">
    <property type="term" value="P:response to heat"/>
    <property type="evidence" value="ECO:0007669"/>
    <property type="project" value="InterPro"/>
</dbReference>
<dbReference type="CDD" id="cd06257">
    <property type="entry name" value="DnaJ"/>
    <property type="match status" value="1"/>
</dbReference>
<dbReference type="CDD" id="cd10747">
    <property type="entry name" value="DnaJ_C"/>
    <property type="match status" value="1"/>
</dbReference>
<dbReference type="CDD" id="cd10719">
    <property type="entry name" value="DnaJ_zf"/>
    <property type="match status" value="1"/>
</dbReference>
<dbReference type="FunFam" id="1.10.287.110:FF:000034">
    <property type="entry name" value="Chaperone protein DnaJ"/>
    <property type="match status" value="1"/>
</dbReference>
<dbReference type="FunFam" id="2.10.230.10:FF:000002">
    <property type="entry name" value="Molecular chaperone DnaJ"/>
    <property type="match status" value="1"/>
</dbReference>
<dbReference type="FunFam" id="2.60.260.20:FF:000004">
    <property type="entry name" value="Molecular chaperone DnaJ"/>
    <property type="match status" value="1"/>
</dbReference>
<dbReference type="Gene3D" id="1.10.287.110">
    <property type="entry name" value="DnaJ domain"/>
    <property type="match status" value="1"/>
</dbReference>
<dbReference type="Gene3D" id="2.10.230.10">
    <property type="entry name" value="Heat shock protein DnaJ, cysteine-rich domain"/>
    <property type="match status" value="1"/>
</dbReference>
<dbReference type="Gene3D" id="2.60.260.20">
    <property type="entry name" value="Urease metallochaperone UreE, N-terminal domain"/>
    <property type="match status" value="2"/>
</dbReference>
<dbReference type="HAMAP" id="MF_01152">
    <property type="entry name" value="DnaJ"/>
    <property type="match status" value="1"/>
</dbReference>
<dbReference type="InterPro" id="IPR012724">
    <property type="entry name" value="DnaJ"/>
</dbReference>
<dbReference type="InterPro" id="IPR002939">
    <property type="entry name" value="DnaJ_C"/>
</dbReference>
<dbReference type="InterPro" id="IPR001623">
    <property type="entry name" value="DnaJ_domain"/>
</dbReference>
<dbReference type="InterPro" id="IPR018253">
    <property type="entry name" value="DnaJ_domain_CS"/>
</dbReference>
<dbReference type="InterPro" id="IPR008971">
    <property type="entry name" value="HSP40/DnaJ_pept-bd"/>
</dbReference>
<dbReference type="InterPro" id="IPR001305">
    <property type="entry name" value="HSP_DnaJ_Cys-rich_dom"/>
</dbReference>
<dbReference type="InterPro" id="IPR036410">
    <property type="entry name" value="HSP_DnaJ_Cys-rich_dom_sf"/>
</dbReference>
<dbReference type="InterPro" id="IPR036869">
    <property type="entry name" value="J_dom_sf"/>
</dbReference>
<dbReference type="NCBIfam" id="TIGR02349">
    <property type="entry name" value="DnaJ_bact"/>
    <property type="match status" value="1"/>
</dbReference>
<dbReference type="NCBIfam" id="NF008035">
    <property type="entry name" value="PRK10767.1"/>
    <property type="match status" value="1"/>
</dbReference>
<dbReference type="PANTHER" id="PTHR43096:SF48">
    <property type="entry name" value="CHAPERONE PROTEIN DNAJ"/>
    <property type="match status" value="1"/>
</dbReference>
<dbReference type="PANTHER" id="PTHR43096">
    <property type="entry name" value="DNAJ HOMOLOG 1, MITOCHONDRIAL-RELATED"/>
    <property type="match status" value="1"/>
</dbReference>
<dbReference type="Pfam" id="PF00226">
    <property type="entry name" value="DnaJ"/>
    <property type="match status" value="1"/>
</dbReference>
<dbReference type="Pfam" id="PF01556">
    <property type="entry name" value="DnaJ_C"/>
    <property type="match status" value="1"/>
</dbReference>
<dbReference type="Pfam" id="PF00684">
    <property type="entry name" value="DnaJ_CXXCXGXG"/>
    <property type="match status" value="1"/>
</dbReference>
<dbReference type="PRINTS" id="PR00625">
    <property type="entry name" value="JDOMAIN"/>
</dbReference>
<dbReference type="SMART" id="SM00271">
    <property type="entry name" value="DnaJ"/>
    <property type="match status" value="1"/>
</dbReference>
<dbReference type="SUPFAM" id="SSF46565">
    <property type="entry name" value="Chaperone J-domain"/>
    <property type="match status" value="1"/>
</dbReference>
<dbReference type="SUPFAM" id="SSF57938">
    <property type="entry name" value="DnaJ/Hsp40 cysteine-rich domain"/>
    <property type="match status" value="1"/>
</dbReference>
<dbReference type="SUPFAM" id="SSF49493">
    <property type="entry name" value="HSP40/DnaJ peptide-binding domain"/>
    <property type="match status" value="2"/>
</dbReference>
<dbReference type="PROSITE" id="PS00636">
    <property type="entry name" value="DNAJ_1"/>
    <property type="match status" value="1"/>
</dbReference>
<dbReference type="PROSITE" id="PS50076">
    <property type="entry name" value="DNAJ_2"/>
    <property type="match status" value="1"/>
</dbReference>
<dbReference type="PROSITE" id="PS51188">
    <property type="entry name" value="ZF_CR"/>
    <property type="match status" value="1"/>
</dbReference>